<sequence length="192" mass="21723">MKDKAPVSSQQDHFSRGGAVGGKPISDVRGTSRPFYRKPVSHNTIAELAEGFRVLSNGQKTISIPMKEVSALMASVGLHLSDEEFHEVMRVFGQGEQTNTEELSFKDFLSLMMCEVDDTMLEEMRGAFLHYDKQKTGFVTKKQFTELFATGGECSTPEEVEELLTIAEQDETDDKIDYNRFINELIHRLNFM</sequence>
<protein>
    <recommendedName>
        <fullName>EF-hand protein 5</fullName>
        <shortName>EFH5</shortName>
    </recommendedName>
</protein>
<comment type="developmental stage">
    <text>Present at similar levels in the mammalian bloodstream form and the insect procyclic form.</text>
</comment>
<comment type="domain">
    <text>This protein has four EF-hand domains, two of which may be functional calcium-binding sites.</text>
</comment>
<accession>P25027</accession>
<feature type="chain" id="PRO_0000073835" description="EF-hand protein 5">
    <location>
        <begin position="1"/>
        <end position="192"/>
    </location>
</feature>
<feature type="domain" description="EF-hand 1" evidence="3">
    <location>
        <begin position="46"/>
        <end position="80"/>
    </location>
</feature>
<feature type="domain" description="EF-hand 2" evidence="3">
    <location>
        <begin position="81"/>
        <end position="118"/>
    </location>
</feature>
<feature type="domain" description="EF-hand 3" evidence="1">
    <location>
        <begin position="119"/>
        <end position="154"/>
    </location>
</feature>
<feature type="domain" description="EF-hand 4" evidence="3">
    <location>
        <begin position="155"/>
        <end position="190"/>
    </location>
</feature>
<feature type="region of interest" description="Disordered" evidence="2">
    <location>
        <begin position="1"/>
        <end position="36"/>
    </location>
</feature>
<feature type="binding site" evidence="3">
    <location>
        <position position="100"/>
    </location>
    <ligand>
        <name>Ca(2+)</name>
        <dbReference type="ChEBI" id="CHEBI:29108"/>
        <label>1</label>
    </ligand>
</feature>
<feature type="binding site" evidence="3">
    <location>
        <position position="102"/>
    </location>
    <ligand>
        <name>Ca(2+)</name>
        <dbReference type="ChEBI" id="CHEBI:29108"/>
        <label>1</label>
    </ligand>
</feature>
<feature type="binding site" evidence="3">
    <location>
        <position position="107"/>
    </location>
    <ligand>
        <name>Ca(2+)</name>
        <dbReference type="ChEBI" id="CHEBI:29108"/>
        <label>1</label>
    </ligand>
</feature>
<feature type="binding site" evidence="3">
    <location>
        <position position="132"/>
    </location>
    <ligand>
        <name>Ca(2+)</name>
        <dbReference type="ChEBI" id="CHEBI:29108"/>
        <label>2</label>
    </ligand>
</feature>
<feature type="binding site" evidence="3">
    <location>
        <position position="136"/>
    </location>
    <ligand>
        <name>Ca(2+)</name>
        <dbReference type="ChEBI" id="CHEBI:29108"/>
        <label>2</label>
    </ligand>
</feature>
<proteinExistence type="evidence at transcript level"/>
<evidence type="ECO:0000255" key="1">
    <source>
        <dbReference type="PROSITE-ProRule" id="PRU00448"/>
    </source>
</evidence>
<evidence type="ECO:0000256" key="2">
    <source>
        <dbReference type="SAM" id="MobiDB-lite"/>
    </source>
</evidence>
<evidence type="ECO:0000305" key="3"/>
<organism>
    <name type="scientific">Trypanosoma brucei brucei</name>
    <dbReference type="NCBI Taxonomy" id="5702"/>
    <lineage>
        <taxon>Eukaryota</taxon>
        <taxon>Discoba</taxon>
        <taxon>Euglenozoa</taxon>
        <taxon>Kinetoplastea</taxon>
        <taxon>Metakinetoplastina</taxon>
        <taxon>Trypanosomatida</taxon>
        <taxon>Trypanosomatidae</taxon>
        <taxon>Trypanosoma</taxon>
    </lineage>
</organism>
<reference key="1">
    <citation type="journal article" date="1993" name="Mol. Cell. Biol.">
        <title>Genomic and transcriptional linkage of the genes for calmodulin, EF-hand 5 protein, and ubiquitin extension protein 52 in Trypanosoma brucei.</title>
        <authorList>
            <person name="Wong S."/>
            <person name="Morales T.H."/>
            <person name="Neigel J.E."/>
            <person name="Campbell D.A."/>
        </authorList>
    </citation>
    <scope>NUCLEOTIDE SEQUENCE [GENOMIC DNA]</scope>
    <source>
        <strain>427</strain>
    </source>
</reference>
<reference key="2">
    <citation type="journal article" date="1992" name="Mol. Gen. Genet.">
        <title>Identification of a new EF-hand superfamily member from Trypanosoma brucei.</title>
        <authorList>
            <person name="Wong S."/>
            <person name="Kretsinger R.H."/>
            <person name="Campbell D.A."/>
        </authorList>
    </citation>
    <scope>SIMILARITY TO EF-HAND PROTEINS</scope>
</reference>
<keyword id="KW-0106">Calcium</keyword>
<keyword id="KW-0479">Metal-binding</keyword>
<keyword id="KW-0677">Repeat</keyword>
<dbReference type="EMBL" id="X56511">
    <property type="protein sequence ID" value="CAA39862.1"/>
    <property type="molecule type" value="Genomic_DNA"/>
</dbReference>
<dbReference type="PIR" id="B48111">
    <property type="entry name" value="B48111"/>
</dbReference>
<dbReference type="SMR" id="P25027"/>
<dbReference type="GO" id="GO:0016460">
    <property type="term" value="C:myosin II complex"/>
    <property type="evidence" value="ECO:0007669"/>
    <property type="project" value="TreeGrafter"/>
</dbReference>
<dbReference type="GO" id="GO:0005509">
    <property type="term" value="F:calcium ion binding"/>
    <property type="evidence" value="ECO:0007669"/>
    <property type="project" value="InterPro"/>
</dbReference>
<dbReference type="FunFam" id="1.10.238.10:FF:000003">
    <property type="entry name" value="Calmodulin A"/>
    <property type="match status" value="1"/>
</dbReference>
<dbReference type="Gene3D" id="1.10.238.10">
    <property type="entry name" value="EF-hand"/>
    <property type="match status" value="2"/>
</dbReference>
<dbReference type="InterPro" id="IPR050230">
    <property type="entry name" value="CALM/Myosin/TropC-like"/>
</dbReference>
<dbReference type="InterPro" id="IPR011992">
    <property type="entry name" value="EF-hand-dom_pair"/>
</dbReference>
<dbReference type="InterPro" id="IPR002048">
    <property type="entry name" value="EF_hand_dom"/>
</dbReference>
<dbReference type="PANTHER" id="PTHR23048:SF0">
    <property type="entry name" value="CALMODULIN LIKE 3"/>
    <property type="match status" value="1"/>
</dbReference>
<dbReference type="PANTHER" id="PTHR23048">
    <property type="entry name" value="MYOSIN LIGHT CHAIN 1, 3"/>
    <property type="match status" value="1"/>
</dbReference>
<dbReference type="SUPFAM" id="SSF47473">
    <property type="entry name" value="EF-hand"/>
    <property type="match status" value="1"/>
</dbReference>
<dbReference type="PROSITE" id="PS50222">
    <property type="entry name" value="EF_HAND_2"/>
    <property type="match status" value="2"/>
</dbReference>
<name>EFH5_TRYBB</name>